<protein>
    <recommendedName>
        <fullName evidence="1">Cyclic pyranopterin monophosphate synthase</fullName>
        <ecNumber evidence="1">4.6.1.17</ecNumber>
    </recommendedName>
    <alternativeName>
        <fullName evidence="1">Molybdenum cofactor biosynthesis protein C</fullName>
    </alternativeName>
</protein>
<gene>
    <name evidence="1" type="primary">moaC</name>
    <name type="ordered locus">XCC0997</name>
</gene>
<accession>Q8PBW9</accession>
<reference key="1">
    <citation type="journal article" date="2002" name="Nature">
        <title>Comparison of the genomes of two Xanthomonas pathogens with differing host specificities.</title>
        <authorList>
            <person name="da Silva A.C.R."/>
            <person name="Ferro J.A."/>
            <person name="Reinach F.C."/>
            <person name="Farah C.S."/>
            <person name="Furlan L.R."/>
            <person name="Quaggio R.B."/>
            <person name="Monteiro-Vitorello C.B."/>
            <person name="Van Sluys M.A."/>
            <person name="Almeida N.F. Jr."/>
            <person name="Alves L.M.C."/>
            <person name="do Amaral A.M."/>
            <person name="Bertolini M.C."/>
            <person name="Camargo L.E.A."/>
            <person name="Camarotte G."/>
            <person name="Cannavan F."/>
            <person name="Cardozo J."/>
            <person name="Chambergo F."/>
            <person name="Ciapina L.P."/>
            <person name="Cicarelli R.M.B."/>
            <person name="Coutinho L.L."/>
            <person name="Cursino-Santos J.R."/>
            <person name="El-Dorry H."/>
            <person name="Faria J.B."/>
            <person name="Ferreira A.J.S."/>
            <person name="Ferreira R.C.C."/>
            <person name="Ferro M.I.T."/>
            <person name="Formighieri E.F."/>
            <person name="Franco M.C."/>
            <person name="Greggio C.C."/>
            <person name="Gruber A."/>
            <person name="Katsuyama A.M."/>
            <person name="Kishi L.T."/>
            <person name="Leite R.P."/>
            <person name="Lemos E.G.M."/>
            <person name="Lemos M.V.F."/>
            <person name="Locali E.C."/>
            <person name="Machado M.A."/>
            <person name="Madeira A.M.B.N."/>
            <person name="Martinez-Rossi N.M."/>
            <person name="Martins E.C."/>
            <person name="Meidanis J."/>
            <person name="Menck C.F.M."/>
            <person name="Miyaki C.Y."/>
            <person name="Moon D.H."/>
            <person name="Moreira L.M."/>
            <person name="Novo M.T.M."/>
            <person name="Okura V.K."/>
            <person name="Oliveira M.C."/>
            <person name="Oliveira V.R."/>
            <person name="Pereira H.A."/>
            <person name="Rossi A."/>
            <person name="Sena J.A.D."/>
            <person name="Silva C."/>
            <person name="de Souza R.F."/>
            <person name="Spinola L.A.F."/>
            <person name="Takita M.A."/>
            <person name="Tamura R.E."/>
            <person name="Teixeira E.C."/>
            <person name="Tezza R.I.D."/>
            <person name="Trindade dos Santos M."/>
            <person name="Truffi D."/>
            <person name="Tsai S.M."/>
            <person name="White F.F."/>
            <person name="Setubal J.C."/>
            <person name="Kitajima J.P."/>
        </authorList>
    </citation>
    <scope>NUCLEOTIDE SEQUENCE [LARGE SCALE GENOMIC DNA]</scope>
    <source>
        <strain>ATCC 33913 / DSM 3586 / NCPPB 528 / LMG 568 / P 25</strain>
    </source>
</reference>
<keyword id="KW-0456">Lyase</keyword>
<keyword id="KW-0501">Molybdenum cofactor biosynthesis</keyword>
<keyword id="KW-1185">Reference proteome</keyword>
<name>MOAC_XANCP</name>
<proteinExistence type="inferred from homology"/>
<comment type="function">
    <text evidence="1">Catalyzes the conversion of (8S)-3',8-cyclo-7,8-dihydroguanosine 5'-triphosphate to cyclic pyranopterin monophosphate (cPMP).</text>
</comment>
<comment type="catalytic activity">
    <reaction evidence="1">
        <text>(8S)-3',8-cyclo-7,8-dihydroguanosine 5'-triphosphate = cyclic pyranopterin phosphate + diphosphate</text>
        <dbReference type="Rhea" id="RHEA:49580"/>
        <dbReference type="ChEBI" id="CHEBI:33019"/>
        <dbReference type="ChEBI" id="CHEBI:59648"/>
        <dbReference type="ChEBI" id="CHEBI:131766"/>
        <dbReference type="EC" id="4.6.1.17"/>
    </reaction>
</comment>
<comment type="pathway">
    <text evidence="1">Cofactor biosynthesis; molybdopterin biosynthesis.</text>
</comment>
<comment type="subunit">
    <text evidence="1">Homohexamer; trimer of dimers.</text>
</comment>
<comment type="similarity">
    <text evidence="1">Belongs to the MoaC family.</text>
</comment>
<sequence length="165" mass="17516">MPAKTTSARLTHLDDAGLPTMVDVSDKQVTARSATAESRVHFPAAVAAQLRANGLRSAKGGIVETAVIAGTMAVKRTHELIPFCHPLPIDGCRFEIDWAGAQVLQIVCTVRCVHRTGVEMEALTGASVAALTVYDMCKALSHTMRIGPTKLLSKRGGKRDIGAAR</sequence>
<feature type="chain" id="PRO_0000097846" description="Cyclic pyranopterin monophosphate synthase">
    <location>
        <begin position="1"/>
        <end position="165"/>
    </location>
</feature>
<feature type="active site" evidence="1">
    <location>
        <position position="135"/>
    </location>
</feature>
<feature type="binding site" evidence="1">
    <location>
        <begin position="83"/>
        <end position="85"/>
    </location>
    <ligand>
        <name>substrate</name>
    </ligand>
</feature>
<feature type="binding site" evidence="1">
    <location>
        <begin position="120"/>
        <end position="121"/>
    </location>
    <ligand>
        <name>substrate</name>
    </ligand>
</feature>
<evidence type="ECO:0000255" key="1">
    <source>
        <dbReference type="HAMAP-Rule" id="MF_01224"/>
    </source>
</evidence>
<organism>
    <name type="scientific">Xanthomonas campestris pv. campestris (strain ATCC 33913 / DSM 3586 / NCPPB 528 / LMG 568 / P 25)</name>
    <dbReference type="NCBI Taxonomy" id="190485"/>
    <lineage>
        <taxon>Bacteria</taxon>
        <taxon>Pseudomonadati</taxon>
        <taxon>Pseudomonadota</taxon>
        <taxon>Gammaproteobacteria</taxon>
        <taxon>Lysobacterales</taxon>
        <taxon>Lysobacteraceae</taxon>
        <taxon>Xanthomonas</taxon>
    </lineage>
</organism>
<dbReference type="EC" id="4.6.1.17" evidence="1"/>
<dbReference type="EMBL" id="AE008922">
    <property type="protein sequence ID" value="AAM40298.1"/>
    <property type="molecule type" value="Genomic_DNA"/>
</dbReference>
<dbReference type="RefSeq" id="NP_636374.1">
    <property type="nucleotide sequence ID" value="NC_003902.1"/>
</dbReference>
<dbReference type="RefSeq" id="WP_011036201.1">
    <property type="nucleotide sequence ID" value="NC_003902.1"/>
</dbReference>
<dbReference type="SMR" id="Q8PBW9"/>
<dbReference type="STRING" id="190485.XCC0997"/>
<dbReference type="EnsemblBacteria" id="AAM40298">
    <property type="protein sequence ID" value="AAM40298"/>
    <property type="gene ID" value="XCC0997"/>
</dbReference>
<dbReference type="KEGG" id="xcc:XCC0997"/>
<dbReference type="PATRIC" id="fig|190485.4.peg.1062"/>
<dbReference type="eggNOG" id="COG0315">
    <property type="taxonomic scope" value="Bacteria"/>
</dbReference>
<dbReference type="HOGENOM" id="CLU_074693_1_0_6"/>
<dbReference type="OrthoDB" id="9794429at2"/>
<dbReference type="UniPathway" id="UPA00344"/>
<dbReference type="Proteomes" id="UP000001010">
    <property type="component" value="Chromosome"/>
</dbReference>
<dbReference type="GO" id="GO:0061799">
    <property type="term" value="F:cyclic pyranopterin monophosphate synthase activity"/>
    <property type="evidence" value="ECO:0007669"/>
    <property type="project" value="UniProtKB-UniRule"/>
</dbReference>
<dbReference type="GO" id="GO:0006777">
    <property type="term" value="P:Mo-molybdopterin cofactor biosynthetic process"/>
    <property type="evidence" value="ECO:0007669"/>
    <property type="project" value="UniProtKB-UniRule"/>
</dbReference>
<dbReference type="CDD" id="cd01420">
    <property type="entry name" value="MoaC_PE"/>
    <property type="match status" value="1"/>
</dbReference>
<dbReference type="Gene3D" id="3.30.70.640">
    <property type="entry name" value="Molybdopterin cofactor biosynthesis C (MoaC) domain"/>
    <property type="match status" value="1"/>
</dbReference>
<dbReference type="HAMAP" id="MF_01224_B">
    <property type="entry name" value="MoaC_B"/>
    <property type="match status" value="1"/>
</dbReference>
<dbReference type="InterPro" id="IPR023045">
    <property type="entry name" value="MoaC"/>
</dbReference>
<dbReference type="InterPro" id="IPR047594">
    <property type="entry name" value="MoaC_bact/euk"/>
</dbReference>
<dbReference type="InterPro" id="IPR036522">
    <property type="entry name" value="MoaC_sf"/>
</dbReference>
<dbReference type="InterPro" id="IPR002820">
    <property type="entry name" value="Mopterin_CF_biosynth-C_dom"/>
</dbReference>
<dbReference type="NCBIfam" id="TIGR00581">
    <property type="entry name" value="moaC"/>
    <property type="match status" value="1"/>
</dbReference>
<dbReference type="NCBIfam" id="NF006870">
    <property type="entry name" value="PRK09364.1"/>
    <property type="match status" value="1"/>
</dbReference>
<dbReference type="Pfam" id="PF01967">
    <property type="entry name" value="MoaC"/>
    <property type="match status" value="1"/>
</dbReference>
<dbReference type="SUPFAM" id="SSF55040">
    <property type="entry name" value="Molybdenum cofactor biosynthesis protein C, MoaC"/>
    <property type="match status" value="1"/>
</dbReference>